<sequence>MTMTPQHPGMPDEQRSVEEHMALSSLFTTLEDLTAWSRKHSLWPFNFGLSCCYVEQVTVLTPVYDQARFGAEVIRASPRQADLLVVSGTVFHKMAAPLLRLYEQMRAPRWVIAMGACACSGGMYDIYSVVQGVDRFIPVDVYIPGCPPRPEAVLDALIMLQQQVGSERRPLGVTVGNTAGLGFDAPRRRDQRRDERMAQTLLDPPESL</sequence>
<proteinExistence type="inferred from homology"/>
<evidence type="ECO:0000255" key="1">
    <source>
        <dbReference type="HAMAP-Rule" id="MF_01356"/>
    </source>
</evidence>
<evidence type="ECO:0000256" key="2">
    <source>
        <dbReference type="SAM" id="MobiDB-lite"/>
    </source>
</evidence>
<protein>
    <recommendedName>
        <fullName evidence="1">NADH-quinone oxidoreductase subunit B 2</fullName>
        <ecNumber evidence="1">7.1.1.-</ecNumber>
    </recommendedName>
    <alternativeName>
        <fullName evidence="1">NADH dehydrogenase I subunit B 2</fullName>
    </alternativeName>
    <alternativeName>
        <fullName evidence="1">NDH-1 subunit B 2</fullName>
    </alternativeName>
</protein>
<organism>
    <name type="scientific">Rhodopseudomonas palustris (strain TIE-1)</name>
    <dbReference type="NCBI Taxonomy" id="395960"/>
    <lineage>
        <taxon>Bacteria</taxon>
        <taxon>Pseudomonadati</taxon>
        <taxon>Pseudomonadota</taxon>
        <taxon>Alphaproteobacteria</taxon>
        <taxon>Hyphomicrobiales</taxon>
        <taxon>Nitrobacteraceae</taxon>
        <taxon>Rhodopseudomonas</taxon>
    </lineage>
</organism>
<comment type="function">
    <text evidence="1">NDH-1 shuttles electrons from NADH, via FMN and iron-sulfur (Fe-S) centers, to quinones in the respiratory chain. The immediate electron acceptor for the enzyme in this species is believed to be ubiquinone. Couples the redox reaction to proton translocation (for every two electrons transferred, four hydrogen ions are translocated across the cytoplasmic membrane), and thus conserves the redox energy in a proton gradient.</text>
</comment>
<comment type="catalytic activity">
    <reaction evidence="1">
        <text>a quinone + NADH + 5 H(+)(in) = a quinol + NAD(+) + 4 H(+)(out)</text>
        <dbReference type="Rhea" id="RHEA:57888"/>
        <dbReference type="ChEBI" id="CHEBI:15378"/>
        <dbReference type="ChEBI" id="CHEBI:24646"/>
        <dbReference type="ChEBI" id="CHEBI:57540"/>
        <dbReference type="ChEBI" id="CHEBI:57945"/>
        <dbReference type="ChEBI" id="CHEBI:132124"/>
    </reaction>
</comment>
<comment type="cofactor">
    <cofactor evidence="1">
        <name>[4Fe-4S] cluster</name>
        <dbReference type="ChEBI" id="CHEBI:49883"/>
    </cofactor>
    <text evidence="1">Binds 1 [4Fe-4S] cluster.</text>
</comment>
<comment type="subunit">
    <text evidence="1">NDH-1 is composed of 14 different subunits. Subunits NuoB, C, D, E, F, and G constitute the peripheral sector of the complex.</text>
</comment>
<comment type="subcellular location">
    <subcellularLocation>
        <location evidence="1">Cell inner membrane</location>
        <topology evidence="1">Peripheral membrane protein</topology>
        <orientation evidence="1">Cytoplasmic side</orientation>
    </subcellularLocation>
</comment>
<comment type="similarity">
    <text evidence="1">Belongs to the complex I 20 kDa subunit family.</text>
</comment>
<gene>
    <name evidence="1" type="primary">nuoB2</name>
    <name type="ordered locus">Rpal_4742</name>
</gene>
<feature type="chain" id="PRO_0000376346" description="NADH-quinone oxidoreductase subunit B 2">
    <location>
        <begin position="1"/>
        <end position="208"/>
    </location>
</feature>
<feature type="region of interest" description="Disordered" evidence="2">
    <location>
        <begin position="182"/>
        <end position="208"/>
    </location>
</feature>
<feature type="compositionally biased region" description="Basic and acidic residues" evidence="2">
    <location>
        <begin position="185"/>
        <end position="197"/>
    </location>
</feature>
<feature type="binding site" evidence="1">
    <location>
        <position position="51"/>
    </location>
    <ligand>
        <name>[4Fe-4S] cluster</name>
        <dbReference type="ChEBI" id="CHEBI:49883"/>
    </ligand>
</feature>
<feature type="binding site" evidence="1">
    <location>
        <position position="52"/>
    </location>
    <ligand>
        <name>[4Fe-4S] cluster</name>
        <dbReference type="ChEBI" id="CHEBI:49883"/>
    </ligand>
</feature>
<feature type="binding site" evidence="1">
    <location>
        <position position="117"/>
    </location>
    <ligand>
        <name>[4Fe-4S] cluster</name>
        <dbReference type="ChEBI" id="CHEBI:49883"/>
    </ligand>
</feature>
<feature type="binding site" evidence="1">
    <location>
        <position position="146"/>
    </location>
    <ligand>
        <name>[4Fe-4S] cluster</name>
        <dbReference type="ChEBI" id="CHEBI:49883"/>
    </ligand>
</feature>
<name>NUOB2_RHOPT</name>
<reference key="1">
    <citation type="submission" date="2008-05" db="EMBL/GenBank/DDBJ databases">
        <title>Complete sequence of Rhodopseudomonas palustris TIE-1.</title>
        <authorList>
            <consortium name="US DOE Joint Genome Institute"/>
            <person name="Lucas S."/>
            <person name="Copeland A."/>
            <person name="Lapidus A."/>
            <person name="Glavina del Rio T."/>
            <person name="Dalin E."/>
            <person name="Tice H."/>
            <person name="Pitluck S."/>
            <person name="Chain P."/>
            <person name="Malfatti S."/>
            <person name="Shin M."/>
            <person name="Vergez L."/>
            <person name="Lang D."/>
            <person name="Schmutz J."/>
            <person name="Larimer F."/>
            <person name="Land M."/>
            <person name="Hauser L."/>
            <person name="Kyrpides N."/>
            <person name="Mikhailova N."/>
            <person name="Emerson D."/>
            <person name="Newman D.K."/>
            <person name="Roden E."/>
            <person name="Richardson P."/>
        </authorList>
    </citation>
    <scope>NUCLEOTIDE SEQUENCE [LARGE SCALE GENOMIC DNA]</scope>
    <source>
        <strain>TIE-1</strain>
    </source>
</reference>
<dbReference type="EC" id="7.1.1.-" evidence="1"/>
<dbReference type="EMBL" id="CP001096">
    <property type="protein sequence ID" value="ACF03233.1"/>
    <property type="molecule type" value="Genomic_DNA"/>
</dbReference>
<dbReference type="RefSeq" id="WP_011159798.1">
    <property type="nucleotide sequence ID" value="NC_011004.1"/>
</dbReference>
<dbReference type="SMR" id="B3Q6T4"/>
<dbReference type="KEGG" id="rpt:Rpal_4742"/>
<dbReference type="HOGENOM" id="CLU_055737_7_3_5"/>
<dbReference type="OrthoDB" id="9786737at2"/>
<dbReference type="Proteomes" id="UP000001725">
    <property type="component" value="Chromosome"/>
</dbReference>
<dbReference type="GO" id="GO:0005886">
    <property type="term" value="C:plasma membrane"/>
    <property type="evidence" value="ECO:0007669"/>
    <property type="project" value="UniProtKB-SubCell"/>
</dbReference>
<dbReference type="GO" id="GO:0045271">
    <property type="term" value="C:respiratory chain complex I"/>
    <property type="evidence" value="ECO:0007669"/>
    <property type="project" value="TreeGrafter"/>
</dbReference>
<dbReference type="GO" id="GO:0051539">
    <property type="term" value="F:4 iron, 4 sulfur cluster binding"/>
    <property type="evidence" value="ECO:0007669"/>
    <property type="project" value="UniProtKB-KW"/>
</dbReference>
<dbReference type="GO" id="GO:0005506">
    <property type="term" value="F:iron ion binding"/>
    <property type="evidence" value="ECO:0007669"/>
    <property type="project" value="UniProtKB-UniRule"/>
</dbReference>
<dbReference type="GO" id="GO:0008137">
    <property type="term" value="F:NADH dehydrogenase (ubiquinone) activity"/>
    <property type="evidence" value="ECO:0007669"/>
    <property type="project" value="InterPro"/>
</dbReference>
<dbReference type="GO" id="GO:0050136">
    <property type="term" value="F:NADH:ubiquinone reductase (non-electrogenic) activity"/>
    <property type="evidence" value="ECO:0007669"/>
    <property type="project" value="UniProtKB-UniRule"/>
</dbReference>
<dbReference type="GO" id="GO:0048038">
    <property type="term" value="F:quinone binding"/>
    <property type="evidence" value="ECO:0007669"/>
    <property type="project" value="UniProtKB-KW"/>
</dbReference>
<dbReference type="GO" id="GO:0009060">
    <property type="term" value="P:aerobic respiration"/>
    <property type="evidence" value="ECO:0007669"/>
    <property type="project" value="TreeGrafter"/>
</dbReference>
<dbReference type="GO" id="GO:0015990">
    <property type="term" value="P:electron transport coupled proton transport"/>
    <property type="evidence" value="ECO:0007669"/>
    <property type="project" value="TreeGrafter"/>
</dbReference>
<dbReference type="FunFam" id="3.40.50.12280:FF:000002">
    <property type="entry name" value="NADH-quinone oxidoreductase subunit B"/>
    <property type="match status" value="1"/>
</dbReference>
<dbReference type="Gene3D" id="3.40.50.12280">
    <property type="match status" value="1"/>
</dbReference>
<dbReference type="HAMAP" id="MF_01356">
    <property type="entry name" value="NDH1_NuoB"/>
    <property type="match status" value="1"/>
</dbReference>
<dbReference type="InterPro" id="IPR006137">
    <property type="entry name" value="NADH_UbQ_OxRdtase-like_20kDa"/>
</dbReference>
<dbReference type="InterPro" id="IPR006138">
    <property type="entry name" value="NADH_UQ_OxRdtase_20Kd_su"/>
</dbReference>
<dbReference type="NCBIfam" id="TIGR01957">
    <property type="entry name" value="nuoB_fam"/>
    <property type="match status" value="1"/>
</dbReference>
<dbReference type="NCBIfam" id="NF005012">
    <property type="entry name" value="PRK06411.1"/>
    <property type="match status" value="1"/>
</dbReference>
<dbReference type="PANTHER" id="PTHR11995">
    <property type="entry name" value="NADH DEHYDROGENASE"/>
    <property type="match status" value="1"/>
</dbReference>
<dbReference type="PANTHER" id="PTHR11995:SF14">
    <property type="entry name" value="NADH DEHYDROGENASE [UBIQUINONE] IRON-SULFUR PROTEIN 7, MITOCHONDRIAL"/>
    <property type="match status" value="1"/>
</dbReference>
<dbReference type="Pfam" id="PF01058">
    <property type="entry name" value="Oxidored_q6"/>
    <property type="match status" value="1"/>
</dbReference>
<dbReference type="SUPFAM" id="SSF56770">
    <property type="entry name" value="HydA/Nqo6-like"/>
    <property type="match status" value="1"/>
</dbReference>
<dbReference type="PROSITE" id="PS01150">
    <property type="entry name" value="COMPLEX1_20K"/>
    <property type="match status" value="1"/>
</dbReference>
<keyword id="KW-0004">4Fe-4S</keyword>
<keyword id="KW-0997">Cell inner membrane</keyword>
<keyword id="KW-1003">Cell membrane</keyword>
<keyword id="KW-0408">Iron</keyword>
<keyword id="KW-0411">Iron-sulfur</keyword>
<keyword id="KW-0472">Membrane</keyword>
<keyword id="KW-0479">Metal-binding</keyword>
<keyword id="KW-0520">NAD</keyword>
<keyword id="KW-0874">Quinone</keyword>
<keyword id="KW-1278">Translocase</keyword>
<keyword id="KW-0813">Transport</keyword>
<keyword id="KW-0830">Ubiquinone</keyword>
<accession>B3Q6T4</accession>